<keyword id="KW-0378">Hydrolase</keyword>
<keyword id="KW-0540">Nuclease</keyword>
<keyword id="KW-0539">Nucleus</keyword>
<keyword id="KW-1185">Reference proteome</keyword>
<organism>
    <name type="scientific">Arabidopsis thaliana</name>
    <name type="common">Mouse-ear cress</name>
    <dbReference type="NCBI Taxonomy" id="3702"/>
    <lineage>
        <taxon>Eukaryota</taxon>
        <taxon>Viridiplantae</taxon>
        <taxon>Streptophyta</taxon>
        <taxon>Embryophyta</taxon>
        <taxon>Tracheophyta</taxon>
        <taxon>Spermatophyta</taxon>
        <taxon>Magnoliopsida</taxon>
        <taxon>eudicotyledons</taxon>
        <taxon>Gunneridae</taxon>
        <taxon>Pentapetalae</taxon>
        <taxon>rosids</taxon>
        <taxon>malvids</taxon>
        <taxon>Brassicales</taxon>
        <taxon>Brassicaceae</taxon>
        <taxon>Camelineae</taxon>
        <taxon>Arabidopsis</taxon>
    </lineage>
</organism>
<dbReference type="EC" id="3.1.-.-"/>
<dbReference type="EMBL" id="AC023754">
    <property type="protein sequence ID" value="AAG13071.1"/>
    <property type="molecule type" value="Genomic_DNA"/>
</dbReference>
<dbReference type="EMBL" id="CP002684">
    <property type="protein sequence ID" value="AEE35709.1"/>
    <property type="molecule type" value="Genomic_DNA"/>
</dbReference>
<dbReference type="EMBL" id="CP002684">
    <property type="protein sequence ID" value="AEE35710.1"/>
    <property type="molecule type" value="Genomic_DNA"/>
</dbReference>
<dbReference type="EMBL" id="CP002684">
    <property type="protein sequence ID" value="AEE35711.1"/>
    <property type="molecule type" value="Genomic_DNA"/>
</dbReference>
<dbReference type="EMBL" id="CP002684">
    <property type="protein sequence ID" value="ANM60421.1"/>
    <property type="molecule type" value="Genomic_DNA"/>
</dbReference>
<dbReference type="EMBL" id="AY054232">
    <property type="protein sequence ID" value="AAL06892.1"/>
    <property type="molecule type" value="mRNA"/>
</dbReference>
<dbReference type="EMBL" id="AY066045">
    <property type="protein sequence ID" value="AAL47412.1"/>
    <property type="molecule type" value="mRNA"/>
</dbReference>
<dbReference type="EMBL" id="AY087417">
    <property type="protein sequence ID" value="AAM64965.1"/>
    <property type="molecule type" value="mRNA"/>
</dbReference>
<dbReference type="PIR" id="C96784">
    <property type="entry name" value="C96784"/>
</dbReference>
<dbReference type="RefSeq" id="NP_001322708.1">
    <property type="nucleotide sequence ID" value="NM_001334685.1"/>
</dbReference>
<dbReference type="RefSeq" id="NP_177671.1">
    <property type="nucleotide sequence ID" value="NM_106192.3"/>
</dbReference>
<dbReference type="RefSeq" id="NP_849890.1">
    <property type="nucleotide sequence ID" value="NM_179559.3"/>
</dbReference>
<dbReference type="RefSeq" id="NP_849891.1">
    <property type="nucleotide sequence ID" value="NM_179560.3"/>
</dbReference>
<dbReference type="SMR" id="Q9FWS6"/>
<dbReference type="BioGRID" id="29093">
    <property type="interactions" value="1"/>
</dbReference>
<dbReference type="FunCoup" id="Q9FWS6">
    <property type="interactions" value="225"/>
</dbReference>
<dbReference type="IntAct" id="Q9FWS6">
    <property type="interactions" value="1"/>
</dbReference>
<dbReference type="STRING" id="3702.Q9FWS6"/>
<dbReference type="iPTMnet" id="Q9FWS6"/>
<dbReference type="PaxDb" id="3702-AT1G75380.1"/>
<dbReference type="ProteomicsDB" id="240819"/>
<dbReference type="EnsemblPlants" id="AT1G75380.1">
    <property type="protein sequence ID" value="AT1G75380.1"/>
    <property type="gene ID" value="AT1G75380"/>
</dbReference>
<dbReference type="EnsemblPlants" id="AT1G75380.2">
    <property type="protein sequence ID" value="AT1G75380.2"/>
    <property type="gene ID" value="AT1G75380"/>
</dbReference>
<dbReference type="EnsemblPlants" id="AT1G75380.3">
    <property type="protein sequence ID" value="AT1G75380.3"/>
    <property type="gene ID" value="AT1G75380"/>
</dbReference>
<dbReference type="EnsemblPlants" id="AT1G75380.4">
    <property type="protein sequence ID" value="AT1G75380.4"/>
    <property type="gene ID" value="AT1G75380"/>
</dbReference>
<dbReference type="GeneID" id="843874"/>
<dbReference type="Gramene" id="AT1G75380.1">
    <property type="protein sequence ID" value="AT1G75380.1"/>
    <property type="gene ID" value="AT1G75380"/>
</dbReference>
<dbReference type="Gramene" id="AT1G75380.2">
    <property type="protein sequence ID" value="AT1G75380.2"/>
    <property type="gene ID" value="AT1G75380"/>
</dbReference>
<dbReference type="Gramene" id="AT1G75380.3">
    <property type="protein sequence ID" value="AT1G75380.3"/>
    <property type="gene ID" value="AT1G75380"/>
</dbReference>
<dbReference type="Gramene" id="AT1G75380.4">
    <property type="protein sequence ID" value="AT1G75380.4"/>
    <property type="gene ID" value="AT1G75380"/>
</dbReference>
<dbReference type="KEGG" id="ath:AT1G75380"/>
<dbReference type="Araport" id="AT1G75380"/>
<dbReference type="TAIR" id="AT1G75380">
    <property type="gene designation" value="BBD1"/>
</dbReference>
<dbReference type="eggNOG" id="ENOG502QQ9S">
    <property type="taxonomic scope" value="Eukaryota"/>
</dbReference>
<dbReference type="HOGENOM" id="CLU_050306_1_0_1"/>
<dbReference type="InParanoid" id="Q9FWS6"/>
<dbReference type="OMA" id="QWRDKLS"/>
<dbReference type="OrthoDB" id="566255at2759"/>
<dbReference type="PhylomeDB" id="Q9FWS6"/>
<dbReference type="PRO" id="PR:Q9FWS6"/>
<dbReference type="Proteomes" id="UP000006548">
    <property type="component" value="Chromosome 1"/>
</dbReference>
<dbReference type="ExpressionAtlas" id="Q9FWS6">
    <property type="expression patterns" value="baseline and differential"/>
</dbReference>
<dbReference type="GO" id="GO:0005634">
    <property type="term" value="C:nucleus"/>
    <property type="evidence" value="ECO:0007669"/>
    <property type="project" value="UniProtKB-SubCell"/>
</dbReference>
<dbReference type="GO" id="GO:0004518">
    <property type="term" value="F:nuclease activity"/>
    <property type="evidence" value="ECO:0000314"/>
    <property type="project" value="TAIR"/>
</dbReference>
<dbReference type="GO" id="GO:0050832">
    <property type="term" value="P:defense response to fungus"/>
    <property type="evidence" value="ECO:0000315"/>
    <property type="project" value="TAIR"/>
</dbReference>
<dbReference type="FunFam" id="3.10.690.10:FF:000002">
    <property type="entry name" value="Bifunctional nuclease 1"/>
    <property type="match status" value="1"/>
</dbReference>
<dbReference type="Gene3D" id="3.10.690.10">
    <property type="entry name" value="Bifunctional nuclease domain"/>
    <property type="match status" value="1"/>
</dbReference>
<dbReference type="InterPro" id="IPR036104">
    <property type="entry name" value="BFN_sf"/>
</dbReference>
<dbReference type="InterPro" id="IPR003729">
    <property type="entry name" value="Bi_nuclease_dom"/>
</dbReference>
<dbReference type="InterPro" id="IPR001943">
    <property type="entry name" value="UVR_dom"/>
</dbReference>
<dbReference type="PANTHER" id="PTHR15160:SF3">
    <property type="entry name" value="BIFUNCTIONAL NUCLEASE 1"/>
    <property type="match status" value="1"/>
</dbReference>
<dbReference type="PANTHER" id="PTHR15160">
    <property type="entry name" value="VON HIPPEL-LINDAU PROTEIN"/>
    <property type="match status" value="1"/>
</dbReference>
<dbReference type="Pfam" id="PF02577">
    <property type="entry name" value="BFN_dom"/>
    <property type="match status" value="1"/>
</dbReference>
<dbReference type="Pfam" id="PF02151">
    <property type="entry name" value="UVR"/>
    <property type="match status" value="1"/>
</dbReference>
<dbReference type="SUPFAM" id="SSF103256">
    <property type="entry name" value="Hypothetical protein TM0160"/>
    <property type="match status" value="1"/>
</dbReference>
<dbReference type="PROSITE" id="PS51658">
    <property type="entry name" value="BFN"/>
    <property type="match status" value="1"/>
</dbReference>
<sequence>MRSVQAPVVCPAIRPRQVGACASLVNYTGLKPRSQFWGNRTKGVKSQGTTTTITLRLCNKSIKCVFSSHSDGNGSTAENFNENDEEYVNSSVVEAVEVKSGADGFMVKMRDGRQLRCVHNNPQGGHLPDYAPHPAIVLKMEDGTGLLLPIIVLEMPSVLLMAAMTNVQIARPTMYQVVKEMVDKMGYEVRLVRVTKRVHEAYFAQLFLSKVGNASECVSFDLRPSDAINIAVRCKIPIQVNKYLAYSDGMRVIESGKISTPAPASDGLLFTEQDRPNGQACLDTKEFNILSKMMQAVDEERYDEAAEWRDKLGQFRAKRNLRKYT</sequence>
<comment type="function">
    <text evidence="2">Bifunctional nuclease with both RNase and DNase activities. Involved in basal defense response. Participates in abscisic acid-derived callose deposition following infection by a necrotrophic pathogen.</text>
</comment>
<comment type="subcellular location">
    <subcellularLocation>
        <location evidence="1">Nucleus</location>
    </subcellularLocation>
</comment>
<comment type="induction">
    <text evidence="2">Up-regulated by pathogens, abscisic acid, etephon, salicylic acid and methyl jasmonate.</text>
</comment>
<comment type="disruption phenotype">
    <text evidence="2">Increased susceptibility to fungal pathogens.</text>
</comment>
<comment type="similarity">
    <text evidence="3">Belongs to the bifunctional nuclease family.</text>
</comment>
<feature type="chain" id="PRO_0000419548" description="Bifunctional nuclease 1">
    <location>
        <begin position="1"/>
        <end position="325"/>
    </location>
</feature>
<feature type="domain" description="BFN">
    <location>
        <begin position="117"/>
        <end position="252"/>
    </location>
</feature>
<feature type="domain" description="UVR">
    <location>
        <begin position="284"/>
        <end position="318"/>
    </location>
</feature>
<proteinExistence type="evidence at transcript level"/>
<gene>
    <name type="primary">BBD1</name>
    <name type="ordered locus">At1g75380</name>
    <name type="ORF">F1B16.9</name>
    <name type="ORF">F1B16_15</name>
</gene>
<protein>
    <recommendedName>
        <fullName>Bifunctional nuclease 1</fullName>
        <shortName>AtBBD1</shortName>
        <ecNumber>3.1.-.-</ecNumber>
    </recommendedName>
</protein>
<accession>Q9FWS6</accession>
<evidence type="ECO:0000250" key="1"/>
<evidence type="ECO:0000269" key="2">
    <source>
    </source>
</evidence>
<evidence type="ECO:0000305" key="3"/>
<reference key="1">
    <citation type="journal article" date="2000" name="Nature">
        <title>Sequence and analysis of chromosome 1 of the plant Arabidopsis thaliana.</title>
        <authorList>
            <person name="Theologis A."/>
            <person name="Ecker J.R."/>
            <person name="Palm C.J."/>
            <person name="Federspiel N.A."/>
            <person name="Kaul S."/>
            <person name="White O."/>
            <person name="Alonso J."/>
            <person name="Altafi H."/>
            <person name="Araujo R."/>
            <person name="Bowman C.L."/>
            <person name="Brooks S.Y."/>
            <person name="Buehler E."/>
            <person name="Chan A."/>
            <person name="Chao Q."/>
            <person name="Chen H."/>
            <person name="Cheuk R.F."/>
            <person name="Chin C.W."/>
            <person name="Chung M.K."/>
            <person name="Conn L."/>
            <person name="Conway A.B."/>
            <person name="Conway A.R."/>
            <person name="Creasy T.H."/>
            <person name="Dewar K."/>
            <person name="Dunn P."/>
            <person name="Etgu P."/>
            <person name="Feldblyum T.V."/>
            <person name="Feng J.-D."/>
            <person name="Fong B."/>
            <person name="Fujii C.Y."/>
            <person name="Gill J.E."/>
            <person name="Goldsmith A.D."/>
            <person name="Haas B."/>
            <person name="Hansen N.F."/>
            <person name="Hughes B."/>
            <person name="Huizar L."/>
            <person name="Hunter J.L."/>
            <person name="Jenkins J."/>
            <person name="Johnson-Hopson C."/>
            <person name="Khan S."/>
            <person name="Khaykin E."/>
            <person name="Kim C.J."/>
            <person name="Koo H.L."/>
            <person name="Kremenetskaia I."/>
            <person name="Kurtz D.B."/>
            <person name="Kwan A."/>
            <person name="Lam B."/>
            <person name="Langin-Hooper S."/>
            <person name="Lee A."/>
            <person name="Lee J.M."/>
            <person name="Lenz C.A."/>
            <person name="Li J.H."/>
            <person name="Li Y.-P."/>
            <person name="Lin X."/>
            <person name="Liu S.X."/>
            <person name="Liu Z.A."/>
            <person name="Luros J.S."/>
            <person name="Maiti R."/>
            <person name="Marziali A."/>
            <person name="Militscher J."/>
            <person name="Miranda M."/>
            <person name="Nguyen M."/>
            <person name="Nierman W.C."/>
            <person name="Osborne B.I."/>
            <person name="Pai G."/>
            <person name="Peterson J."/>
            <person name="Pham P.K."/>
            <person name="Rizzo M."/>
            <person name="Rooney T."/>
            <person name="Rowley D."/>
            <person name="Sakano H."/>
            <person name="Salzberg S.L."/>
            <person name="Schwartz J.R."/>
            <person name="Shinn P."/>
            <person name="Southwick A.M."/>
            <person name="Sun H."/>
            <person name="Tallon L.J."/>
            <person name="Tambunga G."/>
            <person name="Toriumi M.J."/>
            <person name="Town C.D."/>
            <person name="Utterback T."/>
            <person name="Van Aken S."/>
            <person name="Vaysberg M."/>
            <person name="Vysotskaia V.S."/>
            <person name="Walker M."/>
            <person name="Wu D."/>
            <person name="Yu G."/>
            <person name="Fraser C.M."/>
            <person name="Venter J.C."/>
            <person name="Davis R.W."/>
        </authorList>
    </citation>
    <scope>NUCLEOTIDE SEQUENCE [LARGE SCALE GENOMIC DNA]</scope>
    <source>
        <strain>cv. Columbia</strain>
    </source>
</reference>
<reference key="2">
    <citation type="journal article" date="2017" name="Plant J.">
        <title>Araport11: a complete reannotation of the Arabidopsis thaliana reference genome.</title>
        <authorList>
            <person name="Cheng C.Y."/>
            <person name="Krishnakumar V."/>
            <person name="Chan A.P."/>
            <person name="Thibaud-Nissen F."/>
            <person name="Schobel S."/>
            <person name="Town C.D."/>
        </authorList>
    </citation>
    <scope>GENOME REANNOTATION</scope>
    <source>
        <strain>cv. Columbia</strain>
    </source>
</reference>
<reference key="3">
    <citation type="journal article" date="2003" name="Science">
        <title>Empirical analysis of transcriptional activity in the Arabidopsis genome.</title>
        <authorList>
            <person name="Yamada K."/>
            <person name="Lim J."/>
            <person name="Dale J.M."/>
            <person name="Chen H."/>
            <person name="Shinn P."/>
            <person name="Palm C.J."/>
            <person name="Southwick A.M."/>
            <person name="Wu H.C."/>
            <person name="Kim C.J."/>
            <person name="Nguyen M."/>
            <person name="Pham P.K."/>
            <person name="Cheuk R.F."/>
            <person name="Karlin-Newmann G."/>
            <person name="Liu S.X."/>
            <person name="Lam B."/>
            <person name="Sakano H."/>
            <person name="Wu T."/>
            <person name="Yu G."/>
            <person name="Miranda M."/>
            <person name="Quach H.L."/>
            <person name="Tripp M."/>
            <person name="Chang C.H."/>
            <person name="Lee J.M."/>
            <person name="Toriumi M.J."/>
            <person name="Chan M.M."/>
            <person name="Tang C.C."/>
            <person name="Onodera C.S."/>
            <person name="Deng J.M."/>
            <person name="Akiyama K."/>
            <person name="Ansari Y."/>
            <person name="Arakawa T."/>
            <person name="Banh J."/>
            <person name="Banno F."/>
            <person name="Bowser L."/>
            <person name="Brooks S.Y."/>
            <person name="Carninci P."/>
            <person name="Chao Q."/>
            <person name="Choy N."/>
            <person name="Enju A."/>
            <person name="Goldsmith A.D."/>
            <person name="Gurjal M."/>
            <person name="Hansen N.F."/>
            <person name="Hayashizaki Y."/>
            <person name="Johnson-Hopson C."/>
            <person name="Hsuan V.W."/>
            <person name="Iida K."/>
            <person name="Karnes M."/>
            <person name="Khan S."/>
            <person name="Koesema E."/>
            <person name="Ishida J."/>
            <person name="Jiang P.X."/>
            <person name="Jones T."/>
            <person name="Kawai J."/>
            <person name="Kamiya A."/>
            <person name="Meyers C."/>
            <person name="Nakajima M."/>
            <person name="Narusaka M."/>
            <person name="Seki M."/>
            <person name="Sakurai T."/>
            <person name="Satou M."/>
            <person name="Tamse R."/>
            <person name="Vaysberg M."/>
            <person name="Wallender E.K."/>
            <person name="Wong C."/>
            <person name="Yamamura Y."/>
            <person name="Yuan S."/>
            <person name="Shinozaki K."/>
            <person name="Davis R.W."/>
            <person name="Theologis A."/>
            <person name="Ecker J.R."/>
        </authorList>
    </citation>
    <scope>NUCLEOTIDE SEQUENCE [LARGE SCALE MRNA]</scope>
    <source>
        <strain>cv. Columbia</strain>
    </source>
</reference>
<reference key="4">
    <citation type="submission" date="2002-03" db="EMBL/GenBank/DDBJ databases">
        <title>Full-length cDNA from Arabidopsis thaliana.</title>
        <authorList>
            <person name="Brover V.V."/>
            <person name="Troukhan M.E."/>
            <person name="Alexandrov N.A."/>
            <person name="Lu Y.-P."/>
            <person name="Flavell R.B."/>
            <person name="Feldmann K.A."/>
        </authorList>
    </citation>
    <scope>NUCLEOTIDE SEQUENCE [LARGE SCALE MRNA]</scope>
</reference>
<reference key="5">
    <citation type="journal article" date="2010" name="Plant Physiol.">
        <title>Novel bifunctional nucleases, OmBBD and AtBBD1, are involved in abscisic acid-mediated callose deposition in Arabidopsis.</title>
        <authorList>
            <person name="You M.K."/>
            <person name="Shin H.Y."/>
            <person name="Kim Y.J."/>
            <person name="Ok S.H."/>
            <person name="Cho S.K."/>
            <person name="Jeung J.U."/>
            <person name="Yoo S.D."/>
            <person name="Kim J.K."/>
            <person name="Shin J.S."/>
        </authorList>
    </citation>
    <scope>FUNCTION</scope>
    <scope>INDUCTION</scope>
    <scope>DISRUPTION PHENOTYPE</scope>
</reference>
<name>BBD1_ARATH</name>